<gene>
    <name type="primary">env</name>
</gene>
<sequence length="865" mass="99026">MRYTIITLGIIVIGIGIVLSKQWITVFYGIPVWKNSSVQAFCMTPTTSLWATTNCIPDDHDYTEVPLNITEPFEAWGDRNPLIAQAASNIHLLFEQTMKPCVKLSPLCIKMNCVELNSTRERATTPTTTPKSTGLPCVGPTSGENLQSCNASIIEREMEDEPASNCTFAMAGYVRDQKKNYYSVVWNDAEIYCKNKTNSTSKECYMIHCNDSVIKEACDKTYWDQLRLRYCAPAGYALLKCNDEDYNGYKQNCSNVSVVHCTGLMNTTVTTGLLLNGSYHENRTQIWQKHRVNNNTVLILFNKHYNLSVTCRRPGNKTVLPVTIMAGLVFHSQKYNMKLRQAWCHFEGNWRGAWREVKQKIVELPKDRYKGTNNTEHIYLQRQWGDPEASNLWFNCQGEFFYCKMDWFLNYLNNKTWDAYHNFCSSKKKGHAPGPCVQRTYVAYHIRSVINDSYTLSKKTYAPPREGHLQCRSTVTGMTVELNYNSKNRTNVTLSPQIESIWAAELGRYKLVEITPIGFAPTEVRRYTGGHERQKRVPFVLGFLGFLGAAGTAMGAAASSLTVQSRHLLAGILQQQKNLLAAVEAQQQMLKLTIWGVKNLNARVTALEKYLEDQARLNSWGCAWKQVCHTTVEWPWTNRTPDWQNMTWLEWERQIADLESNITGQLVKAREQEEKNLDAYQKLTSWSDFWSWFDFSKWLNILKMGFLVIVGIIGLRLLYTVYGCIVRVRQGYVPLSPQIHIHQVGKGRPDNADEPGEGGDNSRIKLESWXKDSKSRCMQLTAWLTRLNTWLYNSCLTLLIQLRKAFQYLQYGLAELKTGAQEILQTLAGVAQNACHQIWLACRSAYRNIVNSPRRVRQGLEEILN</sequence>
<name>ENV_SIVVT</name>
<organism>
    <name type="scientific">Simian immunodeficiency virus agm.vervet (isolate AGM TYO-1)</name>
    <name type="common">SIV-agm.ver</name>
    <name type="synonym">Simian immunodeficiency virus African green monkey vervet</name>
    <dbReference type="NCBI Taxonomy" id="11731"/>
    <lineage>
        <taxon>Viruses</taxon>
        <taxon>Riboviria</taxon>
        <taxon>Pararnavirae</taxon>
        <taxon>Artverviricota</taxon>
        <taxon>Revtraviricetes</taxon>
        <taxon>Ortervirales</taxon>
        <taxon>Retroviridae</taxon>
        <taxon>Orthoretrovirinae</taxon>
        <taxon>Lentivirus</taxon>
        <taxon>Simian immunodeficiency virus</taxon>
    </lineage>
</organism>
<accession>P05886</accession>
<reference key="1">
    <citation type="journal article" date="1988" name="Nature">
        <title>Sequence of simian immunodeficiency virus from African green monkey, a new member of the HIV/SIV group.</title>
        <authorList>
            <person name="Fukasawa M."/>
            <person name="Miura T."/>
            <person name="Hasegawa A."/>
            <person name="Morikawa S."/>
            <person name="Tsujimoto H."/>
            <person name="Miki K."/>
            <person name="Kitamura T."/>
            <person name="Hayami M."/>
        </authorList>
    </citation>
    <scope>NUCLEOTIDE SEQUENCE [GENOMIC DNA]</scope>
</reference>
<proteinExistence type="inferred from homology"/>
<keyword id="KW-0053">Apoptosis</keyword>
<keyword id="KW-0165">Cleavage on pair of basic residues</keyword>
<keyword id="KW-0175">Coiled coil</keyword>
<keyword id="KW-1015">Disulfide bond</keyword>
<keyword id="KW-1168">Fusion of virus membrane with host membrane</keyword>
<keyword id="KW-0325">Glycoprotein</keyword>
<keyword id="KW-1032">Host cell membrane</keyword>
<keyword id="KW-1039">Host endosome</keyword>
<keyword id="KW-1043">Host membrane</keyword>
<keyword id="KW-0945">Host-virus interaction</keyword>
<keyword id="KW-0472">Membrane</keyword>
<keyword id="KW-0732">Signal</keyword>
<keyword id="KW-0812">Transmembrane</keyword>
<keyword id="KW-1133">Transmembrane helix</keyword>
<keyword id="KW-1161">Viral attachment to host cell</keyword>
<keyword id="KW-0261">Viral envelope protein</keyword>
<keyword id="KW-1162">Viral penetration into host cytoplasm</keyword>
<keyword id="KW-0946">Virion</keyword>
<keyword id="KW-1160">Virus entry into host cell</keyword>
<comment type="function">
    <text evidence="1">The surface protein gp120 (SU) attaches the virus to the host lymphoid cell by binding to the primary receptor CD4. This interaction induces a structural rearrangement creating a high affinity binding site for a chemokine coreceptor like CCR5. This peculiar 2 stage receptor-interaction strategy allows gp120 to maintain the highly conserved coreceptor-binding site in a cryptic conformation, protected from neutralizing antibodies. These changes are transmitted to the transmembrane protein gp41 and are thought to activate its fusogenic potential by unmasking its fusion peptide (By similarity).</text>
</comment>
<comment type="function">
    <text evidence="1">Surface protein gp120 (SU) may target the virus to gut-associated lymphoid tissue (GALT) by binding host ITGA4/ITGB7 (alpha-4/beta-7 integrins), a complex that mediates T-cell migration to the GALT. Interaction between gp120 and ITGA4/ITGB7 would allow the virus to enter GALT early in the infection, infecting and killing most of GALT's resting CD4+ T-cells. This T-cell depletion is believed to be the major insult to the host immune system leading to AIDS (By similarity).</text>
</comment>
<comment type="function">
    <text evidence="1">The surface protein gp120 is a ligand for CD209/DC-SIGN and CLEC4M/DC-SIGNR, which are respectively found on dendritic cells (DCs), and on endothelial cells of liver sinusoids and lymph node sinuses. These interactions allow capture of viral particles at mucosal surfaces by these cells and subsequent transmission to permissive cells. DCs are professional antigen presenting cells, critical for host immunity by inducing specific immune responses against a broad variety of pathogens. They act as sentinels in various tissues where they take up antigen, process it, and present it to T-cells following migration to lymphoid organs. SIV subverts the migration properties of dendritic cells to gain access to CD4+ T-cells in lymph nodes. Virus transmission to permissive T-cells occurs either in trans (without DCs infection, through viral capture and transmission), or in cis (following DCs productive infection, through the usual CD4-gp120 interaction), thereby inducing a robust infection. In trans infection, bound virions remain infectious over days and it is proposed that they are not degraded, but protected in non-lysosomal acidic organelles within the DCs close to the cell membrane thus contributing to the viral infectious potential during DCs' migration from the periphery to the lymphoid tissues. On arrival at lymphoid tissues, intact virions recycle back to DCs' cell surface allowing virus transmission to CD4+ T-cells. Virion capture also seems to lead to MHC-II-restricted viral antigen presentation, and probably to the activation of SIV-specific CD4+ cells (By similarity).</text>
</comment>
<comment type="function">
    <text evidence="1">The transmembrane protein gp41 (TM) acts as a class I viral fusion protein. Under the current model, the protein has at least 3 conformational states: pre-fusion native state, pre-hairpin intermediate state, and post-fusion hairpin state. During fusion of viral and target intracellular membranes, the coiled coil regions (heptad repeats) assume a trimer-of-hairpins structure, positioning the fusion peptide in close proximity to the C-terminal region of the ectodomain. The formation of this structure appears to drive apposition and subsequent fusion of viral and target cell membranes. Complete fusion occurs in host cell endosomes. The virus undergoes clathrin-dependent internalization long before endosomal fusion, thus minimizing the surface exposure of conserved viral epitopes during fusion and reducing the efficacy of inhibitors targeting these epitopes. Membranes fusion leads to delivery of the nucleocapsid into the cytoplasm (By similarity).</text>
</comment>
<comment type="function">
    <text evidence="1">The envelope glycoprotein gp160 precursor down-modulates cell surface CD4 antigen by interacting with it in the endoplasmic reticulum and blocking its transport to the cell surface.</text>
</comment>
<comment type="function">
    <text evidence="1">The gp120-gp41 heterodimer allows rapid transcytosis of the virus through CD4 negative cells such as simple epithelial monolayers of the intestinal, rectal and endocervical epithelial barriers. Both gp120 and gp41 specifically recognize glycosphingolipids galactosyl-ceramide (GalCer) or 3' sulfo-galactosyl-ceramide (GalS) present in the lipid rafts structures of epithelial cells. Binding to these alternative receptors allows the rapid transcytosis of the virus through the epithelial cells. This transcytotic vesicle-mediated transport of virions from the apical side to the basolateral side of the epithelial cells does not involve infection of the cells themselves (By similarity).</text>
</comment>
<comment type="subunit">
    <molecule>Surface protein gp120</molecule>
    <text evidence="1">The mature envelope protein (Env) consists of a homotrimer of non-covalently associated gp120-gp41 heterodimers. The resulting complex protrudes from the virus surface as a spike. Interacts with host CD4 and CCR5 (By similarity). Gp120 also interacts with the C-type lectins CD209/DC-SIGN and CLEC4M/DC-SIGNR (collectively referred to as DC-SIGN(R)).</text>
</comment>
<comment type="subunit">
    <molecule>Transmembrane protein gp41</molecule>
    <text evidence="1">The mature envelope protein (Env) consists of a homotrimer of non-covalently associated gp120-gp41 heterodimers. The resulting complex protrudes from the virus surface as a spike.</text>
</comment>
<comment type="subcellular location">
    <molecule>Transmembrane protein gp41</molecule>
    <subcellularLocation>
        <location evidence="1">Virion membrane</location>
        <topology evidence="1">Single-pass type I membrane protein</topology>
    </subcellularLocation>
    <subcellularLocation>
        <location evidence="1">Host cell membrane</location>
        <topology evidence="1">Single-pass type I membrane protein</topology>
    </subcellularLocation>
    <subcellularLocation>
        <location evidence="4">Host endosome membrane</location>
        <topology evidence="4">Single-pass type I membrane protein</topology>
    </subcellularLocation>
    <text evidence="1">It is probably concentrated at the site of budding and incorporated into the virions possibly by contacts between the cytoplasmic tail of Env and the N-terminus of Gag.</text>
</comment>
<comment type="subcellular location">
    <molecule>Surface protein gp120</molecule>
    <subcellularLocation>
        <location evidence="1">Virion membrane</location>
        <topology evidence="1">Peripheral membrane protein</topology>
    </subcellularLocation>
    <subcellularLocation>
        <location evidence="1">Host cell membrane</location>
        <topology evidence="1">Peripheral membrane protein</topology>
    </subcellularLocation>
    <subcellularLocation>
        <location evidence="4">Host endosome membrane</location>
        <topology evidence="4">Peripheral membrane protein</topology>
    </subcellularLocation>
    <text evidence="1">The surface protein is not anchored to the viral envelope, but associates with the extravirion surface through its binding to TM. It is probably concentrated at the site of budding and incorporated into the virions possibly by contacts between the cytoplasmic tail of Env and the N-terminus of Gag (By similarity).</text>
</comment>
<comment type="domain">
    <text evidence="1">Some of the most genetically diverse regions of the viral genome are present in Env. They are called variable regions 1 through 5 (V1 through V5) (By similarity).</text>
</comment>
<comment type="domain">
    <text evidence="1">The YXXL motif is involved in determining the exact site of viral release at the surface of infected mononuclear cells and promotes endocytosis.</text>
</comment>
<comment type="domain">
    <text evidence="1">The 17 amino acids long immunosuppressive region is present in many retroviral envelope proteins. Synthetic peptides derived from this relatively conserved sequence inhibit immune function in vitro and in vivo (By similarity).</text>
</comment>
<comment type="PTM">
    <text evidence="1">Specific enzymatic cleavages in vivo yield mature proteins. Envelope glycoproteins are synthesized as an inactive precursor that is heavily N-glycosylated and processed likely by host cell furin in the Golgi to yield the mature SU and TM proteins. The cleavage site between SU and TM requires the minimal sequence [KR]-X-[KR]-R (By similarity).</text>
</comment>
<comment type="miscellaneous">
    <text>This is an African green monkey isolate.</text>
</comment>
<feature type="signal peptide" evidence="2">
    <location>
        <begin position="1"/>
        <end position="20"/>
    </location>
</feature>
<feature type="chain" id="PRO_0000239508" description="Envelope glycoprotein gp160">
    <location>
        <begin position="21"/>
        <end position="865"/>
    </location>
</feature>
<feature type="chain" id="PRO_0000038462" description="Surface protein gp120" evidence="1">
    <location>
        <begin position="21"/>
        <end position="536"/>
    </location>
</feature>
<feature type="chain" id="PRO_0000038463" description="Transmembrane protein gp41" evidence="1">
    <location>
        <begin position="537"/>
        <end position="865"/>
    </location>
</feature>
<feature type="topological domain" description="Extracellular" evidence="2">
    <location>
        <begin position="21"/>
        <end position="705"/>
    </location>
</feature>
<feature type="transmembrane region" description="Helical" evidence="2">
    <location>
        <begin position="706"/>
        <end position="726"/>
    </location>
</feature>
<feature type="topological domain" description="Cytoplasmic" evidence="2">
    <location>
        <begin position="727"/>
        <end position="865"/>
    </location>
</feature>
<feature type="region of interest" description="V1">
    <location>
        <begin position="113"/>
        <end position="165"/>
    </location>
</feature>
<feature type="region of interest" description="V2">
    <location>
        <begin position="166"/>
        <end position="209"/>
    </location>
</feature>
<feature type="region of interest" description="V3">
    <location>
        <begin position="311"/>
        <end position="343"/>
    </location>
</feature>
<feature type="region of interest" description="V4">
    <location>
        <begin position="403"/>
        <end position="444"/>
    </location>
</feature>
<feature type="region of interest" description="V5">
    <location>
        <begin position="487"/>
        <end position="494"/>
    </location>
</feature>
<feature type="region of interest" description="Fusion peptide" evidence="2">
    <location>
        <begin position="537"/>
        <end position="557"/>
    </location>
</feature>
<feature type="region of interest" description="Immunosuppression" evidence="1">
    <location>
        <begin position="600"/>
        <end position="616"/>
    </location>
</feature>
<feature type="region of interest" description="MPER; binding to GalCer" evidence="1">
    <location>
        <begin position="682"/>
        <end position="703"/>
    </location>
</feature>
<feature type="region of interest" description="Disordered" evidence="3">
    <location>
        <begin position="744"/>
        <end position="763"/>
    </location>
</feature>
<feature type="coiled-coil region" evidence="2">
    <location>
        <begin position="650"/>
        <end position="675"/>
    </location>
</feature>
<feature type="short sequence motif" description="YXXL motif; contains endocytosis signal" evidence="1">
    <location>
        <begin position="732"/>
        <end position="735"/>
    </location>
</feature>
<feature type="site" description="Cleavage; by host furin" evidence="2">
    <location>
        <begin position="536"/>
        <end position="537"/>
    </location>
</feature>
<feature type="site" description="In-frame UAG termination codon">
    <location>
        <position position="770"/>
    </location>
</feature>
<feature type="glycosylation site" description="N-linked (GlcNAc...) asparagine; by host" evidence="2">
    <location>
        <position position="35"/>
    </location>
</feature>
<feature type="glycosylation site" description="N-linked (GlcNAc...) asparagine; by host" evidence="2">
    <location>
        <position position="68"/>
    </location>
</feature>
<feature type="glycosylation site" description="N-linked (GlcNAc...) asparagine; by host" evidence="2">
    <location>
        <position position="117"/>
    </location>
</feature>
<feature type="glycosylation site" description="N-linked (GlcNAc...) asparagine; by host" evidence="2">
    <location>
        <position position="150"/>
    </location>
</feature>
<feature type="glycosylation site" description="N-linked (GlcNAc...) asparagine; by host" evidence="2">
    <location>
        <position position="165"/>
    </location>
</feature>
<feature type="glycosylation site" description="N-linked (GlcNAc...) asparagine; by host" evidence="2">
    <location>
        <position position="195"/>
    </location>
</feature>
<feature type="glycosylation site" description="N-linked (GlcNAc...) asparagine; by host" evidence="2">
    <location>
        <position position="198"/>
    </location>
</feature>
<feature type="glycosylation site" description="N-linked (GlcNAc...) asparagine; by host" evidence="2">
    <location>
        <position position="210"/>
    </location>
</feature>
<feature type="glycosylation site" description="N-linked (GlcNAc...) asparagine; by host" evidence="2">
    <location>
        <position position="252"/>
    </location>
</feature>
<feature type="glycosylation site" description="N-linked (GlcNAc...) asparagine; by host" evidence="2">
    <location>
        <position position="255"/>
    </location>
</feature>
<feature type="glycosylation site" description="N-linked (GlcNAc...) asparagine; by host" evidence="2">
    <location>
        <position position="266"/>
    </location>
</feature>
<feature type="glycosylation site" description="N-linked (GlcNAc...) asparagine; by host" evidence="2">
    <location>
        <position position="276"/>
    </location>
</feature>
<feature type="glycosylation site" description="N-linked (GlcNAc...) asparagine; by host" evidence="2">
    <location>
        <position position="282"/>
    </location>
</feature>
<feature type="glycosylation site" description="N-linked (GlcNAc...) asparagine; by host" evidence="2">
    <location>
        <position position="294"/>
    </location>
</feature>
<feature type="glycosylation site" description="N-linked (GlcNAc...) asparagine; by host" evidence="2">
    <location>
        <position position="306"/>
    </location>
</feature>
<feature type="glycosylation site" description="N-linked (GlcNAc...) asparagine; by host" evidence="2">
    <location>
        <position position="316"/>
    </location>
</feature>
<feature type="glycosylation site" description="N-linked (GlcNAc...) asparagine; by host" evidence="2">
    <location>
        <position position="373"/>
    </location>
</feature>
<feature type="glycosylation site" description="N-linked (GlcNAc...) asparagine; by host" evidence="2">
    <location>
        <position position="414"/>
    </location>
</feature>
<feature type="glycosylation site" description="N-linked (GlcNAc...) asparagine; by host" evidence="2">
    <location>
        <position position="451"/>
    </location>
</feature>
<feature type="glycosylation site" description="N-linked (GlcNAc...) asparagine; by host" evidence="2">
    <location>
        <position position="488"/>
    </location>
</feature>
<feature type="glycosylation site" description="N-linked (GlcNAc...) asparagine; by host" evidence="2">
    <location>
        <position position="491"/>
    </location>
</feature>
<feature type="glycosylation site" description="N-linked (GlcNAc...) asparagine; by host" evidence="2">
    <location>
        <position position="645"/>
    </location>
</feature>
<feature type="glycosylation site" description="N-linked (GlcNAc...) asparagine; by host" evidence="2">
    <location>
        <position position="661"/>
    </location>
</feature>
<feature type="disulfide bond" evidence="1">
    <location>
        <begin position="42"/>
        <end position="55"/>
    </location>
</feature>
<feature type="disulfide bond" evidence="1">
    <location>
        <begin position="101"/>
        <end position="218"/>
    </location>
</feature>
<feature type="disulfide bond" evidence="1">
    <location>
        <begin position="108"/>
        <end position="209"/>
    </location>
</feature>
<feature type="disulfide bond" evidence="1">
    <location>
        <begin position="113"/>
        <end position="166"/>
    </location>
</feature>
<feature type="disulfide bond" evidence="1">
    <location>
        <begin position="231"/>
        <end position="261"/>
    </location>
</feature>
<feature type="disulfide bond" evidence="1">
    <location>
        <begin position="241"/>
        <end position="253"/>
    </location>
</feature>
<feature type="disulfide bond" evidence="1">
    <location>
        <begin position="311"/>
        <end position="344"/>
    </location>
</feature>
<feature type="disulfide bond" evidence="1">
    <location>
        <begin position="396"/>
        <end position="471"/>
    </location>
</feature>
<dbReference type="EMBL" id="X07805">
    <property type="protein sequence ID" value="CAA30663.2"/>
    <property type="molecule type" value="Genomic_DNA"/>
</dbReference>
<dbReference type="PIR" id="G30045">
    <property type="entry name" value="VCLJG4"/>
</dbReference>
<dbReference type="GlyCosmos" id="P05886">
    <property type="glycosylation" value="23 sites, No reported glycans"/>
</dbReference>
<dbReference type="GO" id="GO:0044175">
    <property type="term" value="C:host cell endosome membrane"/>
    <property type="evidence" value="ECO:0007669"/>
    <property type="project" value="UniProtKB-SubCell"/>
</dbReference>
<dbReference type="GO" id="GO:0020002">
    <property type="term" value="C:host cell plasma membrane"/>
    <property type="evidence" value="ECO:0007669"/>
    <property type="project" value="UniProtKB-SubCell"/>
</dbReference>
<dbReference type="GO" id="GO:0016020">
    <property type="term" value="C:membrane"/>
    <property type="evidence" value="ECO:0007669"/>
    <property type="project" value="UniProtKB-KW"/>
</dbReference>
<dbReference type="GO" id="GO:0019031">
    <property type="term" value="C:viral envelope"/>
    <property type="evidence" value="ECO:0007669"/>
    <property type="project" value="UniProtKB-KW"/>
</dbReference>
<dbReference type="GO" id="GO:0055036">
    <property type="term" value="C:virion membrane"/>
    <property type="evidence" value="ECO:0007669"/>
    <property type="project" value="UniProtKB-SubCell"/>
</dbReference>
<dbReference type="GO" id="GO:0005198">
    <property type="term" value="F:structural molecule activity"/>
    <property type="evidence" value="ECO:0007669"/>
    <property type="project" value="InterPro"/>
</dbReference>
<dbReference type="GO" id="GO:0039663">
    <property type="term" value="P:membrane fusion involved in viral entry into host cell"/>
    <property type="evidence" value="ECO:0007669"/>
    <property type="project" value="UniProtKB-KW"/>
</dbReference>
<dbReference type="GO" id="GO:0046718">
    <property type="term" value="P:symbiont entry into host cell"/>
    <property type="evidence" value="ECO:0007669"/>
    <property type="project" value="UniProtKB-KW"/>
</dbReference>
<dbReference type="GO" id="GO:0019062">
    <property type="term" value="P:virion attachment to host cell"/>
    <property type="evidence" value="ECO:0007669"/>
    <property type="project" value="UniProtKB-KW"/>
</dbReference>
<dbReference type="CDD" id="cd09909">
    <property type="entry name" value="HIV-1-like_HR1-HR2"/>
    <property type="match status" value="1"/>
</dbReference>
<dbReference type="Gene3D" id="1.10.287.210">
    <property type="match status" value="1"/>
</dbReference>
<dbReference type="Gene3D" id="2.170.40.20">
    <property type="entry name" value="Human immunodeficiency virus 1, Gp160, envelope glycoprotein"/>
    <property type="match status" value="2"/>
</dbReference>
<dbReference type="InterPro" id="IPR036377">
    <property type="entry name" value="Gp120_core_sf"/>
</dbReference>
<dbReference type="InterPro" id="IPR000328">
    <property type="entry name" value="GP41-like"/>
</dbReference>
<dbReference type="InterPro" id="IPR000777">
    <property type="entry name" value="HIV1_Gp120"/>
</dbReference>
<dbReference type="Pfam" id="PF00516">
    <property type="entry name" value="GP120"/>
    <property type="match status" value="1"/>
</dbReference>
<dbReference type="Pfam" id="PF00517">
    <property type="entry name" value="GP41"/>
    <property type="match status" value="1"/>
</dbReference>
<dbReference type="SUPFAM" id="SSF56502">
    <property type="entry name" value="gp120 core"/>
    <property type="match status" value="1"/>
</dbReference>
<dbReference type="SUPFAM" id="SSF58069">
    <property type="entry name" value="Virus ectodomain"/>
    <property type="match status" value="1"/>
</dbReference>
<evidence type="ECO:0000250" key="1"/>
<evidence type="ECO:0000255" key="2"/>
<evidence type="ECO:0000256" key="3">
    <source>
        <dbReference type="SAM" id="MobiDB-lite"/>
    </source>
</evidence>
<evidence type="ECO:0000305" key="4"/>
<organismHost>
    <name type="scientific">Cercopithecidae</name>
    <name type="common">Old World monkeys</name>
    <dbReference type="NCBI Taxonomy" id="9527"/>
</organismHost>
<protein>
    <recommendedName>
        <fullName>Envelope glycoprotein gp160</fullName>
    </recommendedName>
    <alternativeName>
        <fullName>Env polyprotein</fullName>
    </alternativeName>
    <component>
        <recommendedName>
            <fullName>Surface protein gp120</fullName>
            <shortName>SU</shortName>
        </recommendedName>
        <alternativeName>
            <fullName>Glycoprotein 120</fullName>
            <shortName>gp120</shortName>
        </alternativeName>
    </component>
    <component>
        <recommendedName>
            <fullName>Transmembrane protein gp41</fullName>
            <shortName>TM</shortName>
        </recommendedName>
        <alternativeName>
            <fullName>Glycoprotein 32</fullName>
            <shortName>gp32</shortName>
        </alternativeName>
    </component>
</protein>